<dbReference type="EMBL" id="AY342160">
    <property type="protein sequence ID" value="AAQ17221.1"/>
    <property type="molecule type" value="Genomic_RNA"/>
</dbReference>
<dbReference type="InterPro" id="IPR006784">
    <property type="entry name" value="Coronavirus_Orf3"/>
</dbReference>
<dbReference type="Pfam" id="PF04694">
    <property type="entry name" value="Corona_3"/>
    <property type="match status" value="1"/>
</dbReference>
<sequence>MDIVKSIDTSVDAVLDEFDCAHFAVTLKVEFKTGKLLVCIGFGDTILEAKDKAYAKLGCSIIEEVNSHTVV</sequence>
<feature type="chain" id="PRO_0000289886" description="Non-structural protein 3a">
    <location>
        <begin position="1"/>
        <end position="71"/>
    </location>
</feature>
<organismHost>
    <name type="scientific">Canis lupus familiaris</name>
    <name type="common">Dog</name>
    <name type="synonym">Canis familiaris</name>
    <dbReference type="NCBI Taxonomy" id="9615"/>
</organismHost>
<proteinExistence type="predicted"/>
<gene>
    <name type="ORF">3a</name>
</gene>
<protein>
    <recommendedName>
        <fullName>Non-structural protein 3a</fullName>
        <shortName>ns3a</shortName>
    </recommendedName>
    <alternativeName>
        <fullName>Accessory protein 3a</fullName>
    </alternativeName>
</protein>
<name>NS3A_CVCBG</name>
<accession>Q7T6T2</accession>
<reference key="1">
    <citation type="journal article" date="2004" name="Virus Res.">
        <title>Molecular characterization of a virulent canine coronavirus BGF strain.</title>
        <authorList>
            <person name="Sanchez-Morgado J.M."/>
            <person name="Poynter S."/>
            <person name="Morris T.H."/>
        </authorList>
    </citation>
    <scope>NUCLEOTIDE SEQUENCE [GENOMIC RNA]</scope>
</reference>
<organism>
    <name type="scientific">Canine coronavirus (strain BGF10)</name>
    <name type="common">CCoV</name>
    <name type="synonym">Canine enteric coronavirus</name>
    <dbReference type="NCBI Taxonomy" id="441619"/>
    <lineage>
        <taxon>Viruses</taxon>
        <taxon>Riboviria</taxon>
        <taxon>Orthornavirae</taxon>
        <taxon>Pisuviricota</taxon>
        <taxon>Pisoniviricetes</taxon>
        <taxon>Nidovirales</taxon>
        <taxon>Cornidovirineae</taxon>
        <taxon>Coronaviridae</taxon>
        <taxon>Orthocoronavirinae</taxon>
        <taxon>Alphacoronavirus</taxon>
        <taxon>Tegacovirus</taxon>
        <taxon>Alphacoronavirus 1</taxon>
    </lineage>
</organism>